<keyword id="KW-0240">DNA-directed RNA polymerase</keyword>
<keyword id="KW-0548">Nucleotidyltransferase</keyword>
<keyword id="KW-0804">Transcription</keyword>
<keyword id="KW-0808">Transferase</keyword>
<accession>Q4L888</accession>
<proteinExistence type="inferred from homology"/>
<feature type="chain" id="PRO_0000225303" description="DNA-directed RNA polymerase subunit alpha">
    <location>
        <begin position="1"/>
        <end position="314"/>
    </location>
</feature>
<feature type="region of interest" description="Alpha N-terminal domain (alpha-NTD)" evidence="1">
    <location>
        <begin position="1"/>
        <end position="228"/>
    </location>
</feature>
<feature type="region of interest" description="Alpha C-terminal domain (alpha-CTD)" evidence="1">
    <location>
        <begin position="245"/>
        <end position="314"/>
    </location>
</feature>
<sequence>MIEIEKPRIETIEISEDAKFGKFVVEPLERGYGTTLGNSLRRILLSSLPGAAVKYIEIEGVLHEFSAIDNVVEDVSTIIMNIKKLALKIYSEEDKTLEIDVRDEGEVTASDITHDSDVEVLNPELKIATVSKGGHLKIRLVANKGRGYALAEQNNTSDLPIGVIPVDSLYSPVERVNYTVENTRVGQSSDFDKLTLDVWTNGSITPQESVSLAAKILTEHLNIFVGLTDEAQNAEIMIEKEEDQKEKVLEMSIEELDLSVRSYNCLKRAGINSVQELADKSEADMMKVRNLGRKSLEEVKYKLEDLGLGLRKED</sequence>
<evidence type="ECO:0000255" key="1">
    <source>
        <dbReference type="HAMAP-Rule" id="MF_00059"/>
    </source>
</evidence>
<dbReference type="EC" id="2.7.7.6" evidence="1"/>
<dbReference type="EMBL" id="AP006716">
    <property type="protein sequence ID" value="BAE04137.1"/>
    <property type="molecule type" value="Genomic_DNA"/>
</dbReference>
<dbReference type="RefSeq" id="WP_011275143.1">
    <property type="nucleotide sequence ID" value="NC_007168.1"/>
</dbReference>
<dbReference type="SMR" id="Q4L888"/>
<dbReference type="KEGG" id="sha:SH0828"/>
<dbReference type="eggNOG" id="COG0202">
    <property type="taxonomic scope" value="Bacteria"/>
</dbReference>
<dbReference type="HOGENOM" id="CLU_053084_0_1_9"/>
<dbReference type="OrthoDB" id="9805706at2"/>
<dbReference type="Proteomes" id="UP000000543">
    <property type="component" value="Chromosome"/>
</dbReference>
<dbReference type="GO" id="GO:0005737">
    <property type="term" value="C:cytoplasm"/>
    <property type="evidence" value="ECO:0007669"/>
    <property type="project" value="UniProtKB-ARBA"/>
</dbReference>
<dbReference type="GO" id="GO:0000428">
    <property type="term" value="C:DNA-directed RNA polymerase complex"/>
    <property type="evidence" value="ECO:0007669"/>
    <property type="project" value="UniProtKB-KW"/>
</dbReference>
<dbReference type="GO" id="GO:0003677">
    <property type="term" value="F:DNA binding"/>
    <property type="evidence" value="ECO:0007669"/>
    <property type="project" value="UniProtKB-UniRule"/>
</dbReference>
<dbReference type="GO" id="GO:0003899">
    <property type="term" value="F:DNA-directed RNA polymerase activity"/>
    <property type="evidence" value="ECO:0007669"/>
    <property type="project" value="UniProtKB-UniRule"/>
</dbReference>
<dbReference type="GO" id="GO:0046983">
    <property type="term" value="F:protein dimerization activity"/>
    <property type="evidence" value="ECO:0007669"/>
    <property type="project" value="InterPro"/>
</dbReference>
<dbReference type="GO" id="GO:0006351">
    <property type="term" value="P:DNA-templated transcription"/>
    <property type="evidence" value="ECO:0007669"/>
    <property type="project" value="UniProtKB-UniRule"/>
</dbReference>
<dbReference type="CDD" id="cd06928">
    <property type="entry name" value="RNAP_alpha_NTD"/>
    <property type="match status" value="1"/>
</dbReference>
<dbReference type="FunFam" id="1.10.150.20:FF:000001">
    <property type="entry name" value="DNA-directed RNA polymerase subunit alpha"/>
    <property type="match status" value="1"/>
</dbReference>
<dbReference type="FunFam" id="2.170.120.12:FF:000001">
    <property type="entry name" value="DNA-directed RNA polymerase subunit alpha"/>
    <property type="match status" value="1"/>
</dbReference>
<dbReference type="Gene3D" id="1.10.150.20">
    <property type="entry name" value="5' to 3' exonuclease, C-terminal subdomain"/>
    <property type="match status" value="1"/>
</dbReference>
<dbReference type="Gene3D" id="2.170.120.12">
    <property type="entry name" value="DNA-directed RNA polymerase, insert domain"/>
    <property type="match status" value="1"/>
</dbReference>
<dbReference type="Gene3D" id="3.30.1360.10">
    <property type="entry name" value="RNA polymerase, RBP11-like subunit"/>
    <property type="match status" value="1"/>
</dbReference>
<dbReference type="HAMAP" id="MF_00059">
    <property type="entry name" value="RNApol_bact_RpoA"/>
    <property type="match status" value="1"/>
</dbReference>
<dbReference type="InterPro" id="IPR011262">
    <property type="entry name" value="DNA-dir_RNA_pol_insert"/>
</dbReference>
<dbReference type="InterPro" id="IPR011263">
    <property type="entry name" value="DNA-dir_RNA_pol_RpoA/D/Rpb3"/>
</dbReference>
<dbReference type="InterPro" id="IPR011773">
    <property type="entry name" value="DNA-dir_RpoA"/>
</dbReference>
<dbReference type="InterPro" id="IPR036603">
    <property type="entry name" value="RBP11-like"/>
</dbReference>
<dbReference type="InterPro" id="IPR011260">
    <property type="entry name" value="RNAP_asu_C"/>
</dbReference>
<dbReference type="InterPro" id="IPR036643">
    <property type="entry name" value="RNApol_insert_sf"/>
</dbReference>
<dbReference type="NCBIfam" id="NF003513">
    <property type="entry name" value="PRK05182.1-2"/>
    <property type="match status" value="1"/>
</dbReference>
<dbReference type="NCBIfam" id="NF003515">
    <property type="entry name" value="PRK05182.2-1"/>
    <property type="match status" value="1"/>
</dbReference>
<dbReference type="NCBIfam" id="NF003519">
    <property type="entry name" value="PRK05182.2-5"/>
    <property type="match status" value="1"/>
</dbReference>
<dbReference type="NCBIfam" id="TIGR02027">
    <property type="entry name" value="rpoA"/>
    <property type="match status" value="1"/>
</dbReference>
<dbReference type="Pfam" id="PF01000">
    <property type="entry name" value="RNA_pol_A_bac"/>
    <property type="match status" value="1"/>
</dbReference>
<dbReference type="Pfam" id="PF03118">
    <property type="entry name" value="RNA_pol_A_CTD"/>
    <property type="match status" value="1"/>
</dbReference>
<dbReference type="Pfam" id="PF01193">
    <property type="entry name" value="RNA_pol_L"/>
    <property type="match status" value="1"/>
</dbReference>
<dbReference type="SMART" id="SM00662">
    <property type="entry name" value="RPOLD"/>
    <property type="match status" value="1"/>
</dbReference>
<dbReference type="SUPFAM" id="SSF47789">
    <property type="entry name" value="C-terminal domain of RNA polymerase alpha subunit"/>
    <property type="match status" value="1"/>
</dbReference>
<dbReference type="SUPFAM" id="SSF56553">
    <property type="entry name" value="Insert subdomain of RNA polymerase alpha subunit"/>
    <property type="match status" value="1"/>
</dbReference>
<dbReference type="SUPFAM" id="SSF55257">
    <property type="entry name" value="RBP11-like subunits of RNA polymerase"/>
    <property type="match status" value="1"/>
</dbReference>
<organism>
    <name type="scientific">Staphylococcus haemolyticus (strain JCSC1435)</name>
    <dbReference type="NCBI Taxonomy" id="279808"/>
    <lineage>
        <taxon>Bacteria</taxon>
        <taxon>Bacillati</taxon>
        <taxon>Bacillota</taxon>
        <taxon>Bacilli</taxon>
        <taxon>Bacillales</taxon>
        <taxon>Staphylococcaceae</taxon>
        <taxon>Staphylococcus</taxon>
    </lineage>
</organism>
<comment type="function">
    <text evidence="1">DNA-dependent RNA polymerase catalyzes the transcription of DNA into RNA using the four ribonucleoside triphosphates as substrates.</text>
</comment>
<comment type="catalytic activity">
    <reaction evidence="1">
        <text>RNA(n) + a ribonucleoside 5'-triphosphate = RNA(n+1) + diphosphate</text>
        <dbReference type="Rhea" id="RHEA:21248"/>
        <dbReference type="Rhea" id="RHEA-COMP:14527"/>
        <dbReference type="Rhea" id="RHEA-COMP:17342"/>
        <dbReference type="ChEBI" id="CHEBI:33019"/>
        <dbReference type="ChEBI" id="CHEBI:61557"/>
        <dbReference type="ChEBI" id="CHEBI:140395"/>
        <dbReference type="EC" id="2.7.7.6"/>
    </reaction>
</comment>
<comment type="subunit">
    <text evidence="1">Homodimer. The RNAP catalytic core consists of 2 alpha, 1 beta, 1 beta' and 1 omega subunit. When a sigma factor is associated with the core the holoenzyme is formed, which can initiate transcription.</text>
</comment>
<comment type="domain">
    <text evidence="1">The N-terminal domain is essential for RNAP assembly and basal transcription, whereas the C-terminal domain is involved in interaction with transcriptional regulators and with upstream promoter elements.</text>
</comment>
<comment type="similarity">
    <text evidence="1">Belongs to the RNA polymerase alpha chain family.</text>
</comment>
<name>RPOA_STAHJ</name>
<protein>
    <recommendedName>
        <fullName evidence="1">DNA-directed RNA polymerase subunit alpha</fullName>
        <shortName evidence="1">RNAP subunit alpha</shortName>
        <ecNumber evidence="1">2.7.7.6</ecNumber>
    </recommendedName>
    <alternativeName>
        <fullName evidence="1">RNA polymerase subunit alpha</fullName>
    </alternativeName>
    <alternativeName>
        <fullName evidence="1">Transcriptase subunit alpha</fullName>
    </alternativeName>
</protein>
<reference key="1">
    <citation type="journal article" date="2005" name="J. Bacteriol.">
        <title>Whole-genome sequencing of Staphylococcus haemolyticus uncovers the extreme plasticity of its genome and the evolution of human-colonizing staphylococcal species.</title>
        <authorList>
            <person name="Takeuchi F."/>
            <person name="Watanabe S."/>
            <person name="Baba T."/>
            <person name="Yuzawa H."/>
            <person name="Ito T."/>
            <person name="Morimoto Y."/>
            <person name="Kuroda M."/>
            <person name="Cui L."/>
            <person name="Takahashi M."/>
            <person name="Ankai A."/>
            <person name="Baba S."/>
            <person name="Fukui S."/>
            <person name="Lee J.C."/>
            <person name="Hiramatsu K."/>
        </authorList>
    </citation>
    <scope>NUCLEOTIDE SEQUENCE [LARGE SCALE GENOMIC DNA]</scope>
    <source>
        <strain>JCSC1435</strain>
    </source>
</reference>
<gene>
    <name evidence="1" type="primary">rpoA</name>
    <name type="ordered locus">SH0828</name>
</gene>